<sequence length="780" mass="85269">MTHEEHHAAKTLGIGKAIAVLTSGGDAQGMNAAVRAVVRVGIFTGARVFFVHEGYQGLVDGGEHIREATWESVSMMLQLGGTVIGSARCKDFREREGRLRAAHNLVKRGITNLCVIGGDGSLTGADTFRSEWSDLLNDLQKDGKITAEEATKSSYLNIVGLVGSIDNDFCGTDMTIGTDSALHRIVEIVDAITTTAQSHQRTFVLEVMGRHCGYLALVTSLSCGADWVFIPECPPDDDWEEHLCRRLSETRTRGSRLNIIIVAEGAIDKNGKPITSEDIKNLVVKRLGYDTRVTVLGHVQRGGTPSAFDRILGSRMGVEAVMALLEGTPDTPACVVSLSGNQAVRLPLMECVQVTKDVTKAMDEKRFDEAIKLRGRSFMNNWEVYKLLAHVRPPVSKGGLHTVAVMNVGAPAAGMNAAVRSTVRIGLIQGNRVLVVHDGFEGLAKGQIEEAGWSYVGGWTGQGGSKLGTKRTLPKKNLEQISANITKFNIQGLVIIGGFEAYTGGLELMEGRKQFDELCIPFVVIPATVSNNVPGSDFSIGADTALNTICTTCDRIKQSAAGTKRRVFIIETMGGYCGYLATMAGLAAGADAAYIFEEPFTIRDLQVNVEHLVQKMKTTVKRGLVLRNEKCNENYTTDFIFNLYSEEGKGIFDSRKNVLGHMQQGGSPTPFDRNFATKMGAKAMNWMSGKIKESYRNGRIFANTPDSGCVLGMRKRALVFQPVTELKDQTDFEHRIPKEQWWLKLRPILKILAKYEIDLDTSDHAHLEHISRKRSGEAAV</sequence>
<comment type="function">
    <text evidence="5 6">Catalyzes the phosphorylation of D-fructose 6-phosphate to fructose 1,6-bisphosphate by ATP, the first committing step of glycolysis.</text>
</comment>
<comment type="catalytic activity">
    <reaction evidence="5 6">
        <text>beta-D-fructose 6-phosphate + ATP = beta-D-fructose 1,6-bisphosphate + ADP + H(+)</text>
        <dbReference type="Rhea" id="RHEA:16109"/>
        <dbReference type="ChEBI" id="CHEBI:15378"/>
        <dbReference type="ChEBI" id="CHEBI:30616"/>
        <dbReference type="ChEBI" id="CHEBI:32966"/>
        <dbReference type="ChEBI" id="CHEBI:57634"/>
        <dbReference type="ChEBI" id="CHEBI:456216"/>
        <dbReference type="EC" id="2.7.1.11"/>
    </reaction>
</comment>
<comment type="cofactor">
    <cofactor>
        <name>Mg(2+)</name>
        <dbReference type="ChEBI" id="CHEBI:18420"/>
    </cofactor>
</comment>
<comment type="activity regulation">
    <text evidence="5">Allosterically activated by ADP, AMP, or fructose 2,6-bisphosphate, and allosterically inhibited by ATP or citrate.</text>
</comment>
<comment type="pathway">
    <text evidence="5">Carbohydrate degradation; glycolysis; D-glyceraldehyde 3-phosphate and glycerone phosphate from D-glucose: step 3/4.</text>
</comment>
<comment type="subunit">
    <text evidence="5 6 8">Homo- and heterotetramers (By similarity). Phosphofructokinase (PFK) enzyme functions as a tetramer composed of different combinations of 3 types of subunits, called PFKM (M), PFKL (L) and PFKP (P). The composition of the PFK tetramer differs according to the tissue type it is present in. The kinetic and regulatory properties of the tetrameric enzyme are dependent on the subunit composition, hence can vary across tissues (Probable). Isoform 2 and isoform 3 interact (via N-terminal testis-specific region) with GSTM5. Isoform 2 and isoform 3 interact (via C-terminus) with HK1 (via N-terminal spermatogenic cell-specific region).</text>
</comment>
<comment type="subcellular location">
    <subcellularLocation>
        <location evidence="5">Cytoplasm</location>
    </subcellularLocation>
</comment>
<comment type="subcellular location">
    <molecule>Isoform 2</molecule>
    <subcellularLocation>
        <location evidence="6">Cell projection</location>
        <location evidence="6">Cilium</location>
        <location evidence="6">Flagellum</location>
    </subcellularLocation>
    <text evidence="6">Principal piece region of the sperm flagellum.</text>
</comment>
<comment type="subcellular location">
    <molecule>Isoform 3</molecule>
    <subcellularLocation>
        <location evidence="6">Cell projection</location>
        <location evidence="6">Cilium</location>
        <location evidence="6">Flagellum</location>
    </subcellularLocation>
    <text evidence="6">Principal piece region of the sperm flagellum.</text>
</comment>
<comment type="alternative products">
    <event type="alternative splicing"/>
    <isoform>
        <id>P47857-1</id>
        <name>1</name>
        <sequence type="displayed"/>
    </isoform>
    <isoform>
        <id>P47857-2</id>
        <name>2</name>
        <name evidence="7">Pfkms_V4</name>
        <sequence type="described" ref="VSP_057079"/>
    </isoform>
    <isoform>
        <id>P47857-3</id>
        <name>3</name>
        <name evidence="7">Pfkms_V3</name>
        <sequence type="described" ref="VSP_057080"/>
    </isoform>
</comment>
<comment type="tissue specificity">
    <text evidence="6">Isoform 1 is expressed in skeletal muscle (at protein level). Isoform 2 and isoform 3 are testis-specific and are detected in quiescent sperm (at protein level). They are first detected in the cytoplasm of round spermatids and subsequently in the flagellum of elongated spermatids extending into the seminiferous tubule lumen (at protein level). Isoform 2 is expressed at higher level than isoform 3 in testis.</text>
</comment>
<comment type="developmental stage">
    <text evidence="6">Isoform 2 and isoform 3 are first seen on postnatal day 16 corresponding to the age when midpachytene spermatocytes are present in the synchronous first wave of spermatogenesis. Isoform 2 and isoform 3 levels increase substantially between days 14 and 18 and continue to increase to age 30 days of neonatal testis development.</text>
</comment>
<comment type="PTM">
    <text evidence="1">GlcNAcylation decreases enzyme activity.</text>
</comment>
<comment type="similarity">
    <text evidence="5">Belongs to the phosphofructokinase type A (PFKA) family. ATP-dependent PFK group I subfamily. Eukaryotic two domain clade 'E' sub-subfamily.</text>
</comment>
<comment type="sequence caution" evidence="9">
    <conflict type="miscellaneous discrepancy">
        <sequence resource="EMBL" id="AK138788"/>
    </conflict>
    <text>Intron retention.</text>
</comment>
<protein>
    <recommendedName>
        <fullName evidence="5">ATP-dependent 6-phosphofructokinase, muscle type</fullName>
        <shortName evidence="5">ATP-PFK</shortName>
        <shortName>PFK-M</shortName>
        <ecNumber evidence="5">2.7.1.11</ecNumber>
    </recommendedName>
    <alternativeName>
        <fullName>6-phosphofructokinase type A</fullName>
    </alternativeName>
    <alternativeName>
        <fullName>Phosphofructo-1-kinase isozyme A</fullName>
        <shortName>PFK-A</shortName>
    </alternativeName>
    <alternativeName>
        <fullName evidence="5">Phosphohexokinase</fullName>
    </alternativeName>
</protein>
<organism>
    <name type="scientific">Mus musculus</name>
    <name type="common">Mouse</name>
    <dbReference type="NCBI Taxonomy" id="10090"/>
    <lineage>
        <taxon>Eukaryota</taxon>
        <taxon>Metazoa</taxon>
        <taxon>Chordata</taxon>
        <taxon>Craniata</taxon>
        <taxon>Vertebrata</taxon>
        <taxon>Euteleostomi</taxon>
        <taxon>Mammalia</taxon>
        <taxon>Eutheria</taxon>
        <taxon>Euarchontoglires</taxon>
        <taxon>Glires</taxon>
        <taxon>Rodentia</taxon>
        <taxon>Myomorpha</taxon>
        <taxon>Muroidea</taxon>
        <taxon>Muridae</taxon>
        <taxon>Murinae</taxon>
        <taxon>Mus</taxon>
        <taxon>Mus</taxon>
    </lineage>
</organism>
<gene>
    <name type="primary">Pfkm</name>
    <name type="synonym">Pfk-m</name>
    <name type="synonym">Pfka</name>
</gene>
<feature type="initiator methionine" description="Removed" evidence="2">
    <location>
        <position position="1"/>
    </location>
</feature>
<feature type="chain" id="PRO_0000112018" description="ATP-dependent 6-phosphofructokinase, muscle type">
    <location>
        <begin position="2"/>
        <end position="780"/>
    </location>
</feature>
<feature type="region of interest" description="N-terminal catalytic PFK domain 1">
    <location>
        <begin position="2"/>
        <end position="390"/>
    </location>
</feature>
<feature type="region of interest" description="Interdomain linker">
    <location>
        <begin position="391"/>
        <end position="401"/>
    </location>
</feature>
<feature type="region of interest" description="C-terminal regulatory PFK domain 2">
    <location>
        <begin position="402"/>
        <end position="780"/>
    </location>
</feature>
<feature type="active site" description="Proton acceptor" evidence="5">
    <location>
        <position position="166"/>
    </location>
</feature>
<feature type="binding site" evidence="5">
    <location>
        <position position="25"/>
    </location>
    <ligand>
        <name>ATP</name>
        <dbReference type="ChEBI" id="CHEBI:30616"/>
    </ligand>
</feature>
<feature type="binding site" evidence="5">
    <location>
        <begin position="88"/>
        <end position="89"/>
    </location>
    <ligand>
        <name>ATP</name>
        <dbReference type="ChEBI" id="CHEBI:30616"/>
    </ligand>
</feature>
<feature type="binding site" evidence="5">
    <location>
        <begin position="118"/>
        <end position="121"/>
    </location>
    <ligand>
        <name>ATP</name>
        <dbReference type="ChEBI" id="CHEBI:30616"/>
    </ligand>
</feature>
<feature type="binding site" evidence="5">
    <location>
        <position position="119"/>
    </location>
    <ligand>
        <name>Mg(2+)</name>
        <dbReference type="ChEBI" id="CHEBI:18420"/>
        <note>catalytic</note>
    </ligand>
</feature>
<feature type="binding site" description="in other chain" evidence="5">
    <location>
        <begin position="164"/>
        <end position="166"/>
    </location>
    <ligand>
        <name>substrate</name>
        <note>ligand shared between dimeric partners</note>
    </ligand>
</feature>
<feature type="binding site" evidence="5">
    <location>
        <position position="201"/>
    </location>
    <ligand>
        <name>substrate</name>
        <note>ligand shared between dimeric partners</note>
    </ligand>
</feature>
<feature type="binding site" description="in other chain" evidence="5">
    <location>
        <begin position="208"/>
        <end position="210"/>
    </location>
    <ligand>
        <name>substrate</name>
        <note>ligand shared between dimeric partners</note>
    </ligand>
</feature>
<feature type="binding site" description="in other chain" evidence="5">
    <location>
        <position position="264"/>
    </location>
    <ligand>
        <name>substrate</name>
        <note>ligand shared between dimeric partners</note>
    </ligand>
</feature>
<feature type="binding site" evidence="5">
    <location>
        <position position="292"/>
    </location>
    <ligand>
        <name>substrate</name>
        <note>ligand shared between dimeric partners</note>
    </ligand>
</feature>
<feature type="binding site" description="in other chain" evidence="5">
    <location>
        <begin position="298"/>
        <end position="301"/>
    </location>
    <ligand>
        <name>substrate</name>
        <note>ligand shared between dimeric partners</note>
    </ligand>
</feature>
<feature type="binding site" description="in other chain" evidence="5">
    <location>
        <position position="471"/>
    </location>
    <ligand>
        <name>beta-D-fructose 2,6-bisphosphate</name>
        <dbReference type="ChEBI" id="CHEBI:58579"/>
        <note>allosteric activator; ligand shared between dimeric partners</note>
    </ligand>
</feature>
<feature type="binding site" description="in other chain" evidence="5">
    <location>
        <begin position="528"/>
        <end position="532"/>
    </location>
    <ligand>
        <name>beta-D-fructose 2,6-bisphosphate</name>
        <dbReference type="ChEBI" id="CHEBI:58579"/>
        <note>allosteric activator; ligand shared between dimeric partners</note>
    </ligand>
</feature>
<feature type="binding site" evidence="5">
    <location>
        <position position="566"/>
    </location>
    <ligand>
        <name>beta-D-fructose 2,6-bisphosphate</name>
        <dbReference type="ChEBI" id="CHEBI:58579"/>
        <note>allosteric activator; ligand shared between dimeric partners</note>
    </ligand>
</feature>
<feature type="binding site" description="in other chain" evidence="5">
    <location>
        <begin position="573"/>
        <end position="575"/>
    </location>
    <ligand>
        <name>beta-D-fructose 2,6-bisphosphate</name>
        <dbReference type="ChEBI" id="CHEBI:58579"/>
        <note>allosteric activator; ligand shared between dimeric partners</note>
    </ligand>
</feature>
<feature type="binding site" description="in other chain" evidence="5">
    <location>
        <position position="629"/>
    </location>
    <ligand>
        <name>beta-D-fructose 2,6-bisphosphate</name>
        <dbReference type="ChEBI" id="CHEBI:58579"/>
        <note>allosteric activator; ligand shared between dimeric partners</note>
    </ligand>
</feature>
<feature type="binding site" evidence="5">
    <location>
        <position position="655"/>
    </location>
    <ligand>
        <name>beta-D-fructose 2,6-bisphosphate</name>
        <dbReference type="ChEBI" id="CHEBI:58579"/>
        <note>allosteric activator; ligand shared between dimeric partners</note>
    </ligand>
</feature>
<feature type="binding site" description="in other chain" evidence="5">
    <location>
        <begin position="661"/>
        <end position="664"/>
    </location>
    <ligand>
        <name>beta-D-fructose 2,6-bisphosphate</name>
        <dbReference type="ChEBI" id="CHEBI:58579"/>
        <note>allosteric activator; ligand shared between dimeric partners</note>
    </ligand>
</feature>
<feature type="binding site" description="in other chain" evidence="5">
    <location>
        <position position="735"/>
    </location>
    <ligand>
        <name>beta-D-fructose 2,6-bisphosphate</name>
        <dbReference type="ChEBI" id="CHEBI:58579"/>
        <note>allosteric activator; ligand shared between dimeric partners</note>
    </ligand>
</feature>
<feature type="modified residue" description="N-acetylthreonine" evidence="2">
    <location>
        <position position="2"/>
    </location>
</feature>
<feature type="modified residue" description="Phosphoserine" evidence="4">
    <location>
        <position position="133"/>
    </location>
</feature>
<feature type="modified residue" description="Phosphoserine" evidence="12">
    <location>
        <position position="377"/>
    </location>
</feature>
<feature type="modified residue" description="N6-(2-hydroxyisobutyryl)lysine" evidence="3">
    <location>
        <position position="557"/>
    </location>
</feature>
<feature type="modified residue" description="Phosphoserine" evidence="3">
    <location>
        <position position="667"/>
    </location>
</feature>
<feature type="modified residue" description="Phosphoserine" evidence="2">
    <location>
        <position position="775"/>
    </location>
</feature>
<feature type="glycosylation site" description="O-linked (GlcNAc) serine" evidence="1">
    <location>
        <position position="530"/>
    </location>
</feature>
<feature type="splice variant" id="VSP_057079" description="In isoform 2." evidence="6">
    <original>M</original>
    <variation>MRREEFQLRFFMCVIESRQVVRTTQSTAGEASTSNMTIPESKADDQWRLDGMDDDPSTVGPVSIPDTEWIM</variation>
    <location>
        <position position="1"/>
    </location>
</feature>
<feature type="splice variant" id="VSP_057080" description="In isoform 3." evidence="7">
    <original>M</original>
    <variation>MEEKLTCSFKLLTELLNLITPLAQALFGKRLQNSILDPGDCLSEFTLEERKASGICQPHLFSKHKEINLFLQGILTCYEVAMRREEFQLRFFMCVIESRQVVRTTQSTAGEASTSNMTIPESKADDQWRLDGMDDDPSTVGPVSIPDTEWIM</variation>
    <location>
        <position position="1"/>
    </location>
</feature>
<accession>P47857</accession>
<accession>C8CMN5</accession>
<accession>C8CMN6</accession>
<accession>C8CMN7</accession>
<accession>O35513</accession>
<accession>Q543L1</accession>
<accession>Q9JK94</accession>
<keyword id="KW-0007">Acetylation</keyword>
<keyword id="KW-0021">Allosteric enzyme</keyword>
<keyword id="KW-0025">Alternative splicing</keyword>
<keyword id="KW-0067">ATP-binding</keyword>
<keyword id="KW-0966">Cell projection</keyword>
<keyword id="KW-0969">Cilium</keyword>
<keyword id="KW-0963">Cytoplasm</keyword>
<keyword id="KW-0903">Direct protein sequencing</keyword>
<keyword id="KW-0282">Flagellum</keyword>
<keyword id="KW-0324">Glycolysis</keyword>
<keyword id="KW-0325">Glycoprotein</keyword>
<keyword id="KW-0379">Hydroxylation</keyword>
<keyword id="KW-0418">Kinase</keyword>
<keyword id="KW-0460">Magnesium</keyword>
<keyword id="KW-0479">Metal-binding</keyword>
<keyword id="KW-0547">Nucleotide-binding</keyword>
<keyword id="KW-0597">Phosphoprotein</keyword>
<keyword id="KW-1185">Reference proteome</keyword>
<keyword id="KW-0808">Transferase</keyword>
<name>PFKAM_MOUSE</name>
<proteinExistence type="evidence at protein level"/>
<reference key="1">
    <citation type="journal article" date="2000" name="Gene">
        <title>Genomic organization, 5'flanking region and tissue-specific expression of mouse phosphofructokinase C gene.</title>
        <authorList>
            <person name="Gunasekera D."/>
            <person name="Kemp R.G."/>
        </authorList>
    </citation>
    <scope>NUCLEOTIDE SEQUENCE [MRNA] (ISOFORM 1)</scope>
    <source>
        <strain>SWR/J</strain>
        <tissue>Brain</tissue>
    </source>
</reference>
<reference key="2">
    <citation type="journal article" date="2005" name="Science">
        <title>The transcriptional landscape of the mammalian genome.</title>
        <authorList>
            <person name="Carninci P."/>
            <person name="Kasukawa T."/>
            <person name="Katayama S."/>
            <person name="Gough J."/>
            <person name="Frith M.C."/>
            <person name="Maeda N."/>
            <person name="Oyama R."/>
            <person name="Ravasi T."/>
            <person name="Lenhard B."/>
            <person name="Wells C."/>
            <person name="Kodzius R."/>
            <person name="Shimokawa K."/>
            <person name="Bajic V.B."/>
            <person name="Brenner S.E."/>
            <person name="Batalov S."/>
            <person name="Forrest A.R."/>
            <person name="Zavolan M."/>
            <person name="Davis M.J."/>
            <person name="Wilming L.G."/>
            <person name="Aidinis V."/>
            <person name="Allen J.E."/>
            <person name="Ambesi-Impiombato A."/>
            <person name="Apweiler R."/>
            <person name="Aturaliya R.N."/>
            <person name="Bailey T.L."/>
            <person name="Bansal M."/>
            <person name="Baxter L."/>
            <person name="Beisel K.W."/>
            <person name="Bersano T."/>
            <person name="Bono H."/>
            <person name="Chalk A.M."/>
            <person name="Chiu K.P."/>
            <person name="Choudhary V."/>
            <person name="Christoffels A."/>
            <person name="Clutterbuck D.R."/>
            <person name="Crowe M.L."/>
            <person name="Dalla E."/>
            <person name="Dalrymple B.P."/>
            <person name="de Bono B."/>
            <person name="Della Gatta G."/>
            <person name="di Bernardo D."/>
            <person name="Down T."/>
            <person name="Engstrom P."/>
            <person name="Fagiolini M."/>
            <person name="Faulkner G."/>
            <person name="Fletcher C.F."/>
            <person name="Fukushima T."/>
            <person name="Furuno M."/>
            <person name="Futaki S."/>
            <person name="Gariboldi M."/>
            <person name="Georgii-Hemming P."/>
            <person name="Gingeras T.R."/>
            <person name="Gojobori T."/>
            <person name="Green R.E."/>
            <person name="Gustincich S."/>
            <person name="Harbers M."/>
            <person name="Hayashi Y."/>
            <person name="Hensch T.K."/>
            <person name="Hirokawa N."/>
            <person name="Hill D."/>
            <person name="Huminiecki L."/>
            <person name="Iacono M."/>
            <person name="Ikeo K."/>
            <person name="Iwama A."/>
            <person name="Ishikawa T."/>
            <person name="Jakt M."/>
            <person name="Kanapin A."/>
            <person name="Katoh M."/>
            <person name="Kawasawa Y."/>
            <person name="Kelso J."/>
            <person name="Kitamura H."/>
            <person name="Kitano H."/>
            <person name="Kollias G."/>
            <person name="Krishnan S.P."/>
            <person name="Kruger A."/>
            <person name="Kummerfeld S.K."/>
            <person name="Kurochkin I.V."/>
            <person name="Lareau L.F."/>
            <person name="Lazarevic D."/>
            <person name="Lipovich L."/>
            <person name="Liu J."/>
            <person name="Liuni S."/>
            <person name="McWilliam S."/>
            <person name="Madan Babu M."/>
            <person name="Madera M."/>
            <person name="Marchionni L."/>
            <person name="Matsuda H."/>
            <person name="Matsuzawa S."/>
            <person name="Miki H."/>
            <person name="Mignone F."/>
            <person name="Miyake S."/>
            <person name="Morris K."/>
            <person name="Mottagui-Tabar S."/>
            <person name="Mulder N."/>
            <person name="Nakano N."/>
            <person name="Nakauchi H."/>
            <person name="Ng P."/>
            <person name="Nilsson R."/>
            <person name="Nishiguchi S."/>
            <person name="Nishikawa S."/>
            <person name="Nori F."/>
            <person name="Ohara O."/>
            <person name="Okazaki Y."/>
            <person name="Orlando V."/>
            <person name="Pang K.C."/>
            <person name="Pavan W.J."/>
            <person name="Pavesi G."/>
            <person name="Pesole G."/>
            <person name="Petrovsky N."/>
            <person name="Piazza S."/>
            <person name="Reed J."/>
            <person name="Reid J.F."/>
            <person name="Ring B.Z."/>
            <person name="Ringwald M."/>
            <person name="Rost B."/>
            <person name="Ruan Y."/>
            <person name="Salzberg S.L."/>
            <person name="Sandelin A."/>
            <person name="Schneider C."/>
            <person name="Schoenbach C."/>
            <person name="Sekiguchi K."/>
            <person name="Semple C.A."/>
            <person name="Seno S."/>
            <person name="Sessa L."/>
            <person name="Sheng Y."/>
            <person name="Shibata Y."/>
            <person name="Shimada H."/>
            <person name="Shimada K."/>
            <person name="Silva D."/>
            <person name="Sinclair B."/>
            <person name="Sperling S."/>
            <person name="Stupka E."/>
            <person name="Sugiura K."/>
            <person name="Sultana R."/>
            <person name="Takenaka Y."/>
            <person name="Taki K."/>
            <person name="Tammoja K."/>
            <person name="Tan S.L."/>
            <person name="Tang S."/>
            <person name="Taylor M.S."/>
            <person name="Tegner J."/>
            <person name="Teichmann S.A."/>
            <person name="Ueda H.R."/>
            <person name="van Nimwegen E."/>
            <person name="Verardo R."/>
            <person name="Wei C.L."/>
            <person name="Yagi K."/>
            <person name="Yamanishi H."/>
            <person name="Zabarovsky E."/>
            <person name="Zhu S."/>
            <person name="Zimmer A."/>
            <person name="Hide W."/>
            <person name="Bult C."/>
            <person name="Grimmond S.M."/>
            <person name="Teasdale R.D."/>
            <person name="Liu E.T."/>
            <person name="Brusic V."/>
            <person name="Quackenbush J."/>
            <person name="Wahlestedt C."/>
            <person name="Mattick J.S."/>
            <person name="Hume D.A."/>
            <person name="Kai C."/>
            <person name="Sasaki D."/>
            <person name="Tomaru Y."/>
            <person name="Fukuda S."/>
            <person name="Kanamori-Katayama M."/>
            <person name="Suzuki M."/>
            <person name="Aoki J."/>
            <person name="Arakawa T."/>
            <person name="Iida J."/>
            <person name="Imamura K."/>
            <person name="Itoh M."/>
            <person name="Kato T."/>
            <person name="Kawaji H."/>
            <person name="Kawagashira N."/>
            <person name="Kawashima T."/>
            <person name="Kojima M."/>
            <person name="Kondo S."/>
            <person name="Konno H."/>
            <person name="Nakano K."/>
            <person name="Ninomiya N."/>
            <person name="Nishio T."/>
            <person name="Okada M."/>
            <person name="Plessy C."/>
            <person name="Shibata K."/>
            <person name="Shiraki T."/>
            <person name="Suzuki S."/>
            <person name="Tagami M."/>
            <person name="Waki K."/>
            <person name="Watahiki A."/>
            <person name="Okamura-Oho Y."/>
            <person name="Suzuki H."/>
            <person name="Kawai J."/>
            <person name="Hayashizaki Y."/>
        </authorList>
    </citation>
    <scope>NUCLEOTIDE SEQUENCE [LARGE SCALE MRNA] (ISOFORM 1)</scope>
    <scope>PARTIAL NUCLEOTIDE SEQUENCE [MRNA] (ISOFORM 3)</scope>
    <source>
        <strain>C57BL/6J</strain>
        <tissue>Kidney</tissue>
        <tissue>Spinal cord</tissue>
        <tissue evidence="11">Thymus</tissue>
    </source>
</reference>
<reference key="3">
    <citation type="journal article" date="1994" name="Biochem. J.">
        <title>Expression of mouse phosphofructokinase-M gene alternative transcripts: evidence for the conserved two-promoter system.</title>
        <authorList>
            <person name="Nakajima H."/>
            <person name="Noguchi T."/>
            <person name="Hamaguchi T."/>
            <person name="Tomita K."/>
            <person name="Hanafusa T."/>
            <person name="Kono N."/>
            <person name="Tanaka T."/>
            <person name="Kuwajima M."/>
            <person name="Matsuzawa Y."/>
        </authorList>
    </citation>
    <scope>NUCLEOTIDE SEQUENCE [MRNA] OF 1-213 (ISOFORM 1)</scope>
    <scope>NUCLEOTIDE SEQUENCE [GENOMIC DNA] OF 259-345</scope>
    <source>
        <strain>ICR</strain>
    </source>
</reference>
<reference key="4">
    <citation type="journal article" date="2010" name="Biol. Reprod.">
        <title>Molecular complex of three testis-specific isozymes associated with the mouse sperm fibrous sheath: hexokinase 1, phosphofructokinase M, and glutathione S-transferase mu class 5.</title>
        <authorList>
            <person name="Nakamura N."/>
            <person name="Mori C."/>
            <person name="Eddy E.M."/>
        </authorList>
    </citation>
    <scope>PARTIAL NUCLEOTIDE SEQUENCE [MRNA] (ISOFORMS 2 AND 3)</scope>
    <scope>FUNCTION</scope>
    <scope>CATALYTIC ACTIVITY</scope>
    <scope>INTERACTION WITH GSTM5 AND HK1</scope>
    <scope>SUBCELLULAR LOCATION</scope>
    <scope>ALTERNATIVE SPLICING</scope>
    <scope>TISSUE SPECIFICITY</scope>
    <scope>DEVELOPMENTAL STAGE</scope>
    <source>
        <strain evidence="10">C57BL/6J</strain>
    </source>
</reference>
<reference key="5">
    <citation type="submission" date="2007-04" db="UniProtKB">
        <authorList>
            <person name="Lubec G."/>
            <person name="Kang S.U."/>
        </authorList>
    </citation>
    <scope>PROTEIN SEQUENCE OF 367-374</scope>
    <scope>IDENTIFICATION BY MASS SPECTROMETRY</scope>
    <source>
        <strain>C57BL/6J</strain>
        <tissue>Brain</tissue>
    </source>
</reference>
<reference key="6">
    <citation type="journal article" date="2010" name="Cell">
        <title>A tissue-specific atlas of mouse protein phosphorylation and expression.</title>
        <authorList>
            <person name="Huttlin E.L."/>
            <person name="Jedrychowski M.P."/>
            <person name="Elias J.E."/>
            <person name="Goswami T."/>
            <person name="Rad R."/>
            <person name="Beausoleil S.A."/>
            <person name="Villen J."/>
            <person name="Haas W."/>
            <person name="Sowa M.E."/>
            <person name="Gygi S.P."/>
        </authorList>
    </citation>
    <scope>PHOSPHORYLATION [LARGE SCALE ANALYSIS] AT SER-377</scope>
    <scope>IDENTIFICATION BY MASS SPECTROMETRY [LARGE SCALE ANALYSIS]</scope>
    <source>
        <tissue>Brain</tissue>
        <tissue>Brown adipose tissue</tissue>
        <tissue>Heart</tissue>
        <tissue>Kidney</tissue>
        <tissue>Liver</tissue>
        <tissue>Lung</tissue>
        <tissue>Pancreas</tissue>
        <tissue>Spleen</tissue>
        <tissue>Testis</tissue>
    </source>
</reference>
<evidence type="ECO:0000250" key="1"/>
<evidence type="ECO:0000250" key="2">
    <source>
        <dbReference type="UniProtKB" id="P00511"/>
    </source>
</evidence>
<evidence type="ECO:0000250" key="3">
    <source>
        <dbReference type="UniProtKB" id="P08237"/>
    </source>
</evidence>
<evidence type="ECO:0000250" key="4">
    <source>
        <dbReference type="UniProtKB" id="P47858"/>
    </source>
</evidence>
<evidence type="ECO:0000255" key="5">
    <source>
        <dbReference type="HAMAP-Rule" id="MF_03184"/>
    </source>
</evidence>
<evidence type="ECO:0000269" key="6">
    <source>
    </source>
</evidence>
<evidence type="ECO:0000303" key="7">
    <source>
    </source>
</evidence>
<evidence type="ECO:0000305" key="8"/>
<evidence type="ECO:0000305" key="9">
    <source>
    </source>
</evidence>
<evidence type="ECO:0000312" key="10">
    <source>
        <dbReference type="EMBL" id="ACU65459.1"/>
    </source>
</evidence>
<evidence type="ECO:0000312" key="11">
    <source>
        <dbReference type="EMBL" id="AK138788"/>
    </source>
</evidence>
<evidence type="ECO:0007744" key="12">
    <source>
    </source>
</evidence>
<dbReference type="EC" id="2.7.1.11" evidence="5"/>
<dbReference type="EMBL" id="AF249894">
    <property type="protein sequence ID" value="AAF63762.1"/>
    <property type="molecule type" value="mRNA"/>
</dbReference>
<dbReference type="EMBL" id="AK002711">
    <property type="protein sequence ID" value="BAB22303.1"/>
    <property type="molecule type" value="mRNA"/>
</dbReference>
<dbReference type="EMBL" id="AK049773">
    <property type="protein sequence ID" value="BAC33913.1"/>
    <property type="molecule type" value="mRNA"/>
</dbReference>
<dbReference type="EMBL" id="AK138788">
    <property type="status" value="NOT_ANNOTATED_CDS"/>
    <property type="molecule type" value="mRNA"/>
</dbReference>
<dbReference type="EMBL" id="D21864">
    <property type="protein sequence ID" value="BAA21892.1"/>
    <property type="molecule type" value="Genomic_DNA"/>
</dbReference>
<dbReference type="EMBL" id="D21865">
    <property type="protein sequence ID" value="BAA21012.1"/>
    <property type="molecule type" value="mRNA"/>
</dbReference>
<dbReference type="EMBL" id="GQ428204">
    <property type="protein sequence ID" value="ACU65458.1"/>
    <property type="molecule type" value="mRNA"/>
</dbReference>
<dbReference type="EMBL" id="GQ428205">
    <property type="protein sequence ID" value="ACU65459.1"/>
    <property type="molecule type" value="mRNA"/>
</dbReference>
<dbReference type="EMBL" id="GQ428206">
    <property type="protein sequence ID" value="ACU65460.1"/>
    <property type="molecule type" value="mRNA"/>
</dbReference>
<dbReference type="CCDS" id="CCDS27786.1">
    <molecule id="P47857-1"/>
</dbReference>
<dbReference type="PIR" id="S53317">
    <property type="entry name" value="S53317"/>
</dbReference>
<dbReference type="RefSeq" id="NP_001156959.1">
    <molecule id="P47857-1"/>
    <property type="nucleotide sequence ID" value="NM_001163487.1"/>
</dbReference>
<dbReference type="RefSeq" id="NP_001156960.1">
    <molecule id="P47857-1"/>
    <property type="nucleotide sequence ID" value="NM_001163488.1"/>
</dbReference>
<dbReference type="RefSeq" id="NP_001344617.1">
    <molecule id="P47857-1"/>
    <property type="nucleotide sequence ID" value="NM_001357688.1"/>
</dbReference>
<dbReference type="RefSeq" id="NP_067489.3">
    <molecule id="P47857-1"/>
    <property type="nucleotide sequence ID" value="NM_021514.4"/>
</dbReference>
<dbReference type="RefSeq" id="XP_006520664.1">
    <molecule id="P47857-2"/>
    <property type="nucleotide sequence ID" value="XM_006520601.4"/>
</dbReference>
<dbReference type="RefSeq" id="XP_006520665.1">
    <property type="nucleotide sequence ID" value="XM_006520602.2"/>
</dbReference>
<dbReference type="RefSeq" id="XP_030104272.1">
    <molecule id="P47857-1"/>
    <property type="nucleotide sequence ID" value="XM_030248412.1"/>
</dbReference>
<dbReference type="SMR" id="P47857"/>
<dbReference type="BioGRID" id="202125">
    <property type="interactions" value="35"/>
</dbReference>
<dbReference type="ComplexPortal" id="CPX-2049">
    <property type="entry name" value="6-phosphofructokinase, M4 homotetramer"/>
</dbReference>
<dbReference type="ComplexPortal" id="CPX-2055">
    <property type="entry name" value="6-phosphofructokinase, ML3 heterotetramer"/>
</dbReference>
<dbReference type="ComplexPortal" id="CPX-2056">
    <property type="entry name" value="6-phosphofructokinase, M2L2 heterotetramer"/>
</dbReference>
<dbReference type="ComplexPortal" id="CPX-2057">
    <property type="entry name" value="6-phosphofructokinase, M3L heterotetramer"/>
</dbReference>
<dbReference type="FunCoup" id="P47857">
    <property type="interactions" value="1885"/>
</dbReference>
<dbReference type="IntAct" id="P47857">
    <property type="interactions" value="7"/>
</dbReference>
<dbReference type="MINT" id="P47857"/>
<dbReference type="STRING" id="10090.ENSMUSP00000059801"/>
<dbReference type="GlyCosmos" id="P47857">
    <property type="glycosylation" value="1 site, No reported glycans"/>
</dbReference>
<dbReference type="GlyGen" id="P47857">
    <property type="glycosylation" value="4 sites, 2 N-linked glycans (2 sites), 1 O-linked glycan (1 site)"/>
</dbReference>
<dbReference type="iPTMnet" id="P47857"/>
<dbReference type="MetOSite" id="P47857"/>
<dbReference type="PhosphoSitePlus" id="P47857"/>
<dbReference type="SwissPalm" id="P47857"/>
<dbReference type="jPOST" id="P47857"/>
<dbReference type="PaxDb" id="10090-ENSMUSP00000059801"/>
<dbReference type="PeptideAtlas" id="P47857"/>
<dbReference type="ProteomicsDB" id="288100">
    <molecule id="P47857-1"/>
</dbReference>
<dbReference type="ProteomicsDB" id="288101">
    <molecule id="P47857-2"/>
</dbReference>
<dbReference type="ProteomicsDB" id="288102">
    <molecule id="P47857-3"/>
</dbReference>
<dbReference type="Pumba" id="P47857"/>
<dbReference type="Antibodypedia" id="1061">
    <property type="antibodies" value="482 antibodies from 38 providers"/>
</dbReference>
<dbReference type="DNASU" id="18642"/>
<dbReference type="Ensembl" id="ENSMUST00000051226.8">
    <molecule id="P47857-1"/>
    <property type="protein sequence ID" value="ENSMUSP00000059801.7"/>
    <property type="gene ID" value="ENSMUSG00000033065.15"/>
</dbReference>
<dbReference type="Ensembl" id="ENSMUST00000163507.8">
    <molecule id="P47857-1"/>
    <property type="protein sequence ID" value="ENSMUSP00000132803.2"/>
    <property type="gene ID" value="ENSMUSG00000033065.15"/>
</dbReference>
<dbReference type="Ensembl" id="ENSMUST00000230445.2">
    <molecule id="P47857-1"/>
    <property type="protein sequence ID" value="ENSMUSP00000155809.2"/>
    <property type="gene ID" value="ENSMUSG00000033065.15"/>
</dbReference>
<dbReference type="GeneID" id="18642"/>
<dbReference type="KEGG" id="mmu:18642"/>
<dbReference type="UCSC" id="uc007xlv.2">
    <molecule id="P47857-1"/>
    <property type="organism name" value="mouse"/>
</dbReference>
<dbReference type="AGR" id="MGI:97548"/>
<dbReference type="CTD" id="5213"/>
<dbReference type="MGI" id="MGI:97548">
    <property type="gene designation" value="Pfkm"/>
</dbReference>
<dbReference type="VEuPathDB" id="HostDB:ENSMUSG00000033065"/>
<dbReference type="eggNOG" id="KOG2440">
    <property type="taxonomic scope" value="Eukaryota"/>
</dbReference>
<dbReference type="GeneTree" id="ENSGT00940000155440"/>
<dbReference type="HOGENOM" id="CLU_011053_0_0_1"/>
<dbReference type="InParanoid" id="P47857"/>
<dbReference type="OMA" id="WHNLGGS"/>
<dbReference type="OrthoDB" id="537915at2759"/>
<dbReference type="PhylomeDB" id="P47857"/>
<dbReference type="TreeFam" id="TF300411"/>
<dbReference type="Reactome" id="R-MMU-70171">
    <property type="pathway name" value="Glycolysis"/>
</dbReference>
<dbReference type="SABIO-RK" id="P47857"/>
<dbReference type="UniPathway" id="UPA00109">
    <property type="reaction ID" value="UER00182"/>
</dbReference>
<dbReference type="BioGRID-ORCS" id="18642">
    <property type="hits" value="3 hits in 77 CRISPR screens"/>
</dbReference>
<dbReference type="CD-CODE" id="CE726F99">
    <property type="entry name" value="Postsynaptic density"/>
</dbReference>
<dbReference type="ChiTaRS" id="Pfkm">
    <property type="organism name" value="mouse"/>
</dbReference>
<dbReference type="PRO" id="PR:P47857"/>
<dbReference type="Proteomes" id="UP000000589">
    <property type="component" value="Chromosome 15"/>
</dbReference>
<dbReference type="RNAct" id="P47857">
    <property type="molecule type" value="protein"/>
</dbReference>
<dbReference type="Bgee" id="ENSMUSG00000033065">
    <property type="expression patterns" value="Expressed in triceps brachii and 263 other cell types or tissues"/>
</dbReference>
<dbReference type="ExpressionAtlas" id="P47857">
    <property type="expression patterns" value="baseline and differential"/>
</dbReference>
<dbReference type="GO" id="GO:0005945">
    <property type="term" value="C:6-phosphofructokinase complex"/>
    <property type="evidence" value="ECO:0007669"/>
    <property type="project" value="Ensembl"/>
</dbReference>
<dbReference type="GO" id="GO:0016324">
    <property type="term" value="C:apical plasma membrane"/>
    <property type="evidence" value="ECO:0007669"/>
    <property type="project" value="Ensembl"/>
</dbReference>
<dbReference type="GO" id="GO:0005829">
    <property type="term" value="C:cytosol"/>
    <property type="evidence" value="ECO:0000314"/>
    <property type="project" value="MGI"/>
</dbReference>
<dbReference type="GO" id="GO:0005634">
    <property type="term" value="C:nucleus"/>
    <property type="evidence" value="ECO:0007669"/>
    <property type="project" value="Ensembl"/>
</dbReference>
<dbReference type="GO" id="GO:0097228">
    <property type="term" value="C:sperm principal piece"/>
    <property type="evidence" value="ECO:0000314"/>
    <property type="project" value="MGI"/>
</dbReference>
<dbReference type="GO" id="GO:0003872">
    <property type="term" value="F:6-phosphofructokinase activity"/>
    <property type="evidence" value="ECO:0000314"/>
    <property type="project" value="MGI"/>
</dbReference>
<dbReference type="GO" id="GO:0005524">
    <property type="term" value="F:ATP binding"/>
    <property type="evidence" value="ECO:0007669"/>
    <property type="project" value="UniProtKB-KW"/>
</dbReference>
<dbReference type="GO" id="GO:0070061">
    <property type="term" value="F:fructose binding"/>
    <property type="evidence" value="ECO:0007669"/>
    <property type="project" value="Ensembl"/>
</dbReference>
<dbReference type="GO" id="GO:0042802">
    <property type="term" value="F:identical protein binding"/>
    <property type="evidence" value="ECO:0000353"/>
    <property type="project" value="MGI"/>
</dbReference>
<dbReference type="GO" id="GO:0019900">
    <property type="term" value="F:kinase binding"/>
    <property type="evidence" value="ECO:0007669"/>
    <property type="project" value="Ensembl"/>
</dbReference>
<dbReference type="GO" id="GO:0046872">
    <property type="term" value="F:metal ion binding"/>
    <property type="evidence" value="ECO:0007669"/>
    <property type="project" value="UniProtKB-KW"/>
</dbReference>
<dbReference type="GO" id="GO:0008443">
    <property type="term" value="F:phosphofructokinase activity"/>
    <property type="evidence" value="ECO:0000314"/>
    <property type="project" value="MGI"/>
</dbReference>
<dbReference type="GO" id="GO:0061621">
    <property type="term" value="P:canonical glycolysis"/>
    <property type="evidence" value="ECO:0000314"/>
    <property type="project" value="MGI"/>
</dbReference>
<dbReference type="GO" id="GO:0006002">
    <property type="term" value="P:fructose 6-phosphate metabolic process"/>
    <property type="evidence" value="ECO:0007669"/>
    <property type="project" value="Ensembl"/>
</dbReference>
<dbReference type="GO" id="GO:0042593">
    <property type="term" value="P:glucose homeostasis"/>
    <property type="evidence" value="ECO:0000315"/>
    <property type="project" value="MGI"/>
</dbReference>
<dbReference type="GO" id="GO:0005980">
    <property type="term" value="P:glycogen catabolic process"/>
    <property type="evidence" value="ECO:0000315"/>
    <property type="project" value="MGI"/>
</dbReference>
<dbReference type="GO" id="GO:0093001">
    <property type="term" value="P:glycolysis from storage polysaccharide through glucose-1-phosphate"/>
    <property type="evidence" value="ECO:0000315"/>
    <property type="project" value="MGI"/>
</dbReference>
<dbReference type="GO" id="GO:0061615">
    <property type="term" value="P:glycolytic process through fructose-6-phosphate"/>
    <property type="evidence" value="ECO:0000314"/>
    <property type="project" value="MGI"/>
</dbReference>
<dbReference type="GO" id="GO:0046716">
    <property type="term" value="P:muscle cell cellular homeostasis"/>
    <property type="evidence" value="ECO:0007669"/>
    <property type="project" value="Ensembl"/>
</dbReference>
<dbReference type="GO" id="GO:0032024">
    <property type="term" value="P:positive regulation of insulin secretion"/>
    <property type="evidence" value="ECO:0000315"/>
    <property type="project" value="MGI"/>
</dbReference>
<dbReference type="GO" id="GO:0045944">
    <property type="term" value="P:positive regulation of transcription by RNA polymerase II"/>
    <property type="evidence" value="ECO:0007669"/>
    <property type="project" value="Ensembl"/>
</dbReference>
<dbReference type="CDD" id="cd00764">
    <property type="entry name" value="Eukaryotic_PFK"/>
    <property type="match status" value="1"/>
</dbReference>
<dbReference type="FunFam" id="3.40.50.450:FF:000004">
    <property type="entry name" value="ATP-dependent 6-phosphofructokinase"/>
    <property type="match status" value="1"/>
</dbReference>
<dbReference type="FunFam" id="3.40.50.460:FF:000001">
    <property type="entry name" value="ATP-dependent 6-phosphofructokinase"/>
    <property type="match status" value="1"/>
</dbReference>
<dbReference type="FunFam" id="3.40.50.460:FF:000003">
    <property type="entry name" value="ATP-dependent 6-phosphofructokinase"/>
    <property type="match status" value="1"/>
</dbReference>
<dbReference type="FunFam" id="3.40.50.450:FF:000043">
    <property type="entry name" value="ATP-dependent 6-phosphofructokinase, platelet type"/>
    <property type="match status" value="1"/>
</dbReference>
<dbReference type="Gene3D" id="3.40.50.450">
    <property type="match status" value="2"/>
</dbReference>
<dbReference type="Gene3D" id="3.40.50.460">
    <property type="entry name" value="Phosphofructokinase domain"/>
    <property type="match status" value="2"/>
</dbReference>
<dbReference type="HAMAP" id="MF_03184">
    <property type="entry name" value="Phosphofructokinase_I_E"/>
    <property type="match status" value="1"/>
</dbReference>
<dbReference type="InterPro" id="IPR009161">
    <property type="entry name" value="6-Pfructokinase_euk"/>
</dbReference>
<dbReference type="InterPro" id="IPR022953">
    <property type="entry name" value="ATP_PFK"/>
</dbReference>
<dbReference type="InterPro" id="IPR041914">
    <property type="entry name" value="PFK_vert-type"/>
</dbReference>
<dbReference type="InterPro" id="IPR015912">
    <property type="entry name" value="Phosphofructokinase_CS"/>
</dbReference>
<dbReference type="InterPro" id="IPR000023">
    <property type="entry name" value="Phosphofructokinase_dom"/>
</dbReference>
<dbReference type="InterPro" id="IPR035966">
    <property type="entry name" value="PKF_sf"/>
</dbReference>
<dbReference type="NCBIfam" id="TIGR02478">
    <property type="entry name" value="6PF1K_euk"/>
    <property type="match status" value="1"/>
</dbReference>
<dbReference type="PANTHER" id="PTHR13697:SF59">
    <property type="entry name" value="ATP-DEPENDENT 6-PHOSPHOFRUCTOKINASE, MUSCLE TYPE"/>
    <property type="match status" value="1"/>
</dbReference>
<dbReference type="PANTHER" id="PTHR13697">
    <property type="entry name" value="PHOSPHOFRUCTOKINASE"/>
    <property type="match status" value="1"/>
</dbReference>
<dbReference type="Pfam" id="PF00365">
    <property type="entry name" value="PFK"/>
    <property type="match status" value="2"/>
</dbReference>
<dbReference type="PIRSF" id="PIRSF000533">
    <property type="entry name" value="ATP_PFK_euk"/>
    <property type="match status" value="1"/>
</dbReference>
<dbReference type="PRINTS" id="PR00476">
    <property type="entry name" value="PHFRCTKINASE"/>
</dbReference>
<dbReference type="SUPFAM" id="SSF53784">
    <property type="entry name" value="Phosphofructokinase"/>
    <property type="match status" value="2"/>
</dbReference>
<dbReference type="PROSITE" id="PS00433">
    <property type="entry name" value="PHOSPHOFRUCTOKINASE"/>
    <property type="match status" value="2"/>
</dbReference>